<proteinExistence type="inferred from homology"/>
<organism>
    <name type="scientific">Solanum bulbocastanum</name>
    <name type="common">Wild potato</name>
    <dbReference type="NCBI Taxonomy" id="147425"/>
    <lineage>
        <taxon>Eukaryota</taxon>
        <taxon>Viridiplantae</taxon>
        <taxon>Streptophyta</taxon>
        <taxon>Embryophyta</taxon>
        <taxon>Tracheophyta</taxon>
        <taxon>Spermatophyta</taxon>
        <taxon>Magnoliopsida</taxon>
        <taxon>eudicotyledons</taxon>
        <taxon>Gunneridae</taxon>
        <taxon>Pentapetalae</taxon>
        <taxon>asterids</taxon>
        <taxon>lamiids</taxon>
        <taxon>Solanales</taxon>
        <taxon>Solanaceae</taxon>
        <taxon>Solanoideae</taxon>
        <taxon>Solaneae</taxon>
        <taxon>Solanum</taxon>
    </lineage>
</organism>
<feature type="chain" id="PRO_0000275334" description="Cytochrome b6">
    <location>
        <begin position="1"/>
        <end position="215"/>
    </location>
</feature>
<feature type="transmembrane region" description="Helical" evidence="1">
    <location>
        <begin position="32"/>
        <end position="52"/>
    </location>
</feature>
<feature type="transmembrane region" description="Helical" evidence="1">
    <location>
        <begin position="90"/>
        <end position="110"/>
    </location>
</feature>
<feature type="transmembrane region" description="Helical" evidence="1">
    <location>
        <begin position="116"/>
        <end position="136"/>
    </location>
</feature>
<feature type="transmembrane region" description="Helical" evidence="1">
    <location>
        <begin position="186"/>
        <end position="206"/>
    </location>
</feature>
<feature type="binding site" description="covalent" evidence="1">
    <location>
        <position position="35"/>
    </location>
    <ligand>
        <name>heme c</name>
        <dbReference type="ChEBI" id="CHEBI:61717"/>
    </ligand>
</feature>
<feature type="binding site" description="axial binding residue" evidence="1">
    <location>
        <position position="86"/>
    </location>
    <ligand>
        <name>heme b</name>
        <dbReference type="ChEBI" id="CHEBI:60344"/>
        <label>2</label>
    </ligand>
    <ligandPart>
        <name>Fe</name>
        <dbReference type="ChEBI" id="CHEBI:18248"/>
    </ligandPart>
</feature>
<feature type="binding site" description="axial binding residue" evidence="1">
    <location>
        <position position="100"/>
    </location>
    <ligand>
        <name>heme b</name>
        <dbReference type="ChEBI" id="CHEBI:60344"/>
        <label>1</label>
    </ligand>
    <ligandPart>
        <name>Fe</name>
        <dbReference type="ChEBI" id="CHEBI:18248"/>
    </ligandPart>
</feature>
<feature type="binding site" description="axial binding residue" evidence="1">
    <location>
        <position position="187"/>
    </location>
    <ligand>
        <name>heme b</name>
        <dbReference type="ChEBI" id="CHEBI:60344"/>
        <label>2</label>
    </ligand>
    <ligandPart>
        <name>Fe</name>
        <dbReference type="ChEBI" id="CHEBI:18248"/>
    </ligandPart>
</feature>
<feature type="binding site" description="axial binding residue" evidence="1">
    <location>
        <position position="202"/>
    </location>
    <ligand>
        <name>heme b</name>
        <dbReference type="ChEBI" id="CHEBI:60344"/>
        <label>1</label>
    </ligand>
    <ligandPart>
        <name>Fe</name>
        <dbReference type="ChEBI" id="CHEBI:18248"/>
    </ligandPart>
</feature>
<evidence type="ECO:0000255" key="1">
    <source>
        <dbReference type="HAMAP-Rule" id="MF_00633"/>
    </source>
</evidence>
<geneLocation type="chloroplast"/>
<reference key="1">
    <citation type="journal article" date="2006" name="Theor. Appl. Genet.">
        <title>Complete chloroplast genome sequences of Solanum bulbocastanum, Solanum lycopersicum and comparative analyses with other Solanaceae genomes.</title>
        <authorList>
            <person name="Daniell H."/>
            <person name="Lee S.-B."/>
            <person name="Grevich J."/>
            <person name="Saski C."/>
            <person name="Quesada-Vargas T."/>
            <person name="Guda C."/>
            <person name="Tomkins J."/>
            <person name="Jansen R.K."/>
        </authorList>
    </citation>
    <scope>NUCLEOTIDE SEQUENCE [LARGE SCALE GENOMIC DNA]</scope>
    <source>
        <strain>cv. PT29</strain>
    </source>
</reference>
<gene>
    <name evidence="1" type="primary">petB</name>
</gene>
<protein>
    <recommendedName>
        <fullName evidence="1">Cytochrome b6</fullName>
    </recommendedName>
</protein>
<name>CYB6_SOLBU</name>
<comment type="function">
    <text evidence="1">Component of the cytochrome b6-f complex, which mediates electron transfer between photosystem II (PSII) and photosystem I (PSI), cyclic electron flow around PSI, and state transitions.</text>
</comment>
<comment type="cofactor">
    <cofactor evidence="1">
        <name>heme b</name>
        <dbReference type="ChEBI" id="CHEBI:60344"/>
    </cofactor>
    <text evidence="1">Binds 2 heme b groups non-covalently with two histidine residues as axial ligands.</text>
</comment>
<comment type="cofactor">
    <cofactor evidence="1">
        <name>heme c</name>
        <dbReference type="ChEBI" id="CHEBI:61717"/>
    </cofactor>
    <text evidence="1">Binds one heme group covalently by a single cysteine link with no axial amino acid ligand. This heme was named heme ci.</text>
</comment>
<comment type="subunit">
    <text evidence="1">The 4 large subunits of the cytochrome b6-f complex are cytochrome b6, subunit IV (17 kDa polypeptide, PetD), cytochrome f and the Rieske protein, while the 4 small subunits are PetG, PetL, PetM and PetN. The complex functions as a dimer.</text>
</comment>
<comment type="subcellular location">
    <subcellularLocation>
        <location evidence="1">Plastid</location>
        <location evidence="1">Chloroplast thylakoid membrane</location>
        <topology evidence="1">Multi-pass membrane protein</topology>
    </subcellularLocation>
</comment>
<comment type="miscellaneous">
    <text evidence="1">Heme 1 (or BH or b566) is high-potential and absorbs at about 566 nm, and heme 2 (or BL or b562) is low-potential and absorbs at about 562 nm.</text>
</comment>
<comment type="similarity">
    <text evidence="1">Belongs to the cytochrome b family. PetB subfamily.</text>
</comment>
<sequence length="215" mass="24151">MSKVYDWFEERLEIQAIADDITSKYVPPHVNIFYCLGGITLTCFLVQVATGFAMTFYYRPTVTEAFASVQYIMTEANFGWLIRSVHRWSASMMVLMMILHVFRVYLTGGFKKPRELTWVTGVVLAVLTASFGVTGYSLPWDQIGYWAVKIVTGVPDAIPVIGSPLVELLRGSASVGQSTLTRFYSLHTFVLPLLTAVFMLMHFPMIRKQGISGPL</sequence>
<accession>Q2MIF8</accession>
<keyword id="KW-0150">Chloroplast</keyword>
<keyword id="KW-0249">Electron transport</keyword>
<keyword id="KW-0349">Heme</keyword>
<keyword id="KW-0408">Iron</keyword>
<keyword id="KW-0472">Membrane</keyword>
<keyword id="KW-0479">Metal-binding</keyword>
<keyword id="KW-0602">Photosynthesis</keyword>
<keyword id="KW-0934">Plastid</keyword>
<keyword id="KW-0793">Thylakoid</keyword>
<keyword id="KW-0812">Transmembrane</keyword>
<keyword id="KW-1133">Transmembrane helix</keyword>
<keyword id="KW-0813">Transport</keyword>
<dbReference type="EMBL" id="DQ347958">
    <property type="protein sequence ID" value="ABC56242.1"/>
    <property type="molecule type" value="Genomic_DNA"/>
</dbReference>
<dbReference type="RefSeq" id="YP_538879.1">
    <property type="nucleotide sequence ID" value="NC_007943.1"/>
</dbReference>
<dbReference type="SMR" id="Q2MIF8"/>
<dbReference type="GeneID" id="3989522"/>
<dbReference type="GO" id="GO:0009535">
    <property type="term" value="C:chloroplast thylakoid membrane"/>
    <property type="evidence" value="ECO:0007669"/>
    <property type="project" value="UniProtKB-SubCell"/>
</dbReference>
<dbReference type="GO" id="GO:0045158">
    <property type="term" value="F:electron transporter, transferring electrons within cytochrome b6/f complex of photosystem II activity"/>
    <property type="evidence" value="ECO:0007669"/>
    <property type="project" value="UniProtKB-UniRule"/>
</dbReference>
<dbReference type="GO" id="GO:0046872">
    <property type="term" value="F:metal ion binding"/>
    <property type="evidence" value="ECO:0007669"/>
    <property type="project" value="UniProtKB-KW"/>
</dbReference>
<dbReference type="GO" id="GO:0016491">
    <property type="term" value="F:oxidoreductase activity"/>
    <property type="evidence" value="ECO:0007669"/>
    <property type="project" value="InterPro"/>
</dbReference>
<dbReference type="GO" id="GO:0015979">
    <property type="term" value="P:photosynthesis"/>
    <property type="evidence" value="ECO:0007669"/>
    <property type="project" value="UniProtKB-UniRule"/>
</dbReference>
<dbReference type="GO" id="GO:0022904">
    <property type="term" value="P:respiratory electron transport chain"/>
    <property type="evidence" value="ECO:0007669"/>
    <property type="project" value="InterPro"/>
</dbReference>
<dbReference type="CDD" id="cd00284">
    <property type="entry name" value="Cytochrome_b_N"/>
    <property type="match status" value="1"/>
</dbReference>
<dbReference type="FunFam" id="1.20.810.10:FF:000001">
    <property type="entry name" value="Cytochrome b6"/>
    <property type="match status" value="1"/>
</dbReference>
<dbReference type="Gene3D" id="1.20.810.10">
    <property type="entry name" value="Cytochrome Bc1 Complex, Chain C"/>
    <property type="match status" value="1"/>
</dbReference>
<dbReference type="HAMAP" id="MF_00633">
    <property type="entry name" value="Cytb6_f_cytb6"/>
    <property type="match status" value="1"/>
</dbReference>
<dbReference type="InterPro" id="IPR005797">
    <property type="entry name" value="Cyt_b/b6_N"/>
</dbReference>
<dbReference type="InterPro" id="IPR023530">
    <property type="entry name" value="Cyt_B6_PetB"/>
</dbReference>
<dbReference type="InterPro" id="IPR027387">
    <property type="entry name" value="Cytb/b6-like_sf"/>
</dbReference>
<dbReference type="InterPro" id="IPR048259">
    <property type="entry name" value="Cytochrome_b_N_euk/bac"/>
</dbReference>
<dbReference type="InterPro" id="IPR016174">
    <property type="entry name" value="Di-haem_cyt_TM"/>
</dbReference>
<dbReference type="NCBIfam" id="NF002990">
    <property type="entry name" value="PRK03735.1"/>
    <property type="match status" value="1"/>
</dbReference>
<dbReference type="PANTHER" id="PTHR19271">
    <property type="entry name" value="CYTOCHROME B"/>
    <property type="match status" value="1"/>
</dbReference>
<dbReference type="PANTHER" id="PTHR19271:SF16">
    <property type="entry name" value="CYTOCHROME B"/>
    <property type="match status" value="1"/>
</dbReference>
<dbReference type="Pfam" id="PF00033">
    <property type="entry name" value="Cytochrome_B"/>
    <property type="match status" value="1"/>
</dbReference>
<dbReference type="PIRSF" id="PIRSF000032">
    <property type="entry name" value="Cytochrome_b6"/>
    <property type="match status" value="1"/>
</dbReference>
<dbReference type="SUPFAM" id="SSF81342">
    <property type="entry name" value="Transmembrane di-heme cytochromes"/>
    <property type="match status" value="1"/>
</dbReference>
<dbReference type="PROSITE" id="PS51002">
    <property type="entry name" value="CYTB_NTER"/>
    <property type="match status" value="1"/>
</dbReference>